<name>RELE_MYCTU</name>
<sequence>MSDDHPYHVAITATAARDLQRLPEKIAAACVEFVFGPLLNNPHRLGKPLRNDLEGLHSARRGDYRVVYAIDDGHHRVEIIHIARRSASYRMNPCRPR</sequence>
<proteinExistence type="evidence at protein level"/>
<protein>
    <recommendedName>
        <fullName>Toxin RelE</fullName>
        <ecNumber>3.1.-.-</ecNumber>
    </recommendedName>
    <alternativeName>
        <fullName>Putative endoribonuclease RelE</fullName>
    </alternativeName>
</protein>
<reference key="1">
    <citation type="journal article" date="1998" name="Nature">
        <title>Deciphering the biology of Mycobacterium tuberculosis from the complete genome sequence.</title>
        <authorList>
            <person name="Cole S.T."/>
            <person name="Brosch R."/>
            <person name="Parkhill J."/>
            <person name="Garnier T."/>
            <person name="Churcher C.M."/>
            <person name="Harris D.E."/>
            <person name="Gordon S.V."/>
            <person name="Eiglmeier K."/>
            <person name="Gas S."/>
            <person name="Barry C.E. III"/>
            <person name="Tekaia F."/>
            <person name="Badcock K."/>
            <person name="Basham D."/>
            <person name="Brown D."/>
            <person name="Chillingworth T."/>
            <person name="Connor R."/>
            <person name="Davies R.M."/>
            <person name="Devlin K."/>
            <person name="Feltwell T."/>
            <person name="Gentles S."/>
            <person name="Hamlin N."/>
            <person name="Holroyd S."/>
            <person name="Hornsby T."/>
            <person name="Jagels K."/>
            <person name="Krogh A."/>
            <person name="McLean J."/>
            <person name="Moule S."/>
            <person name="Murphy L.D."/>
            <person name="Oliver S."/>
            <person name="Osborne J."/>
            <person name="Quail M.A."/>
            <person name="Rajandream M.A."/>
            <person name="Rogers J."/>
            <person name="Rutter S."/>
            <person name="Seeger K."/>
            <person name="Skelton S."/>
            <person name="Squares S."/>
            <person name="Squares R."/>
            <person name="Sulston J.E."/>
            <person name="Taylor K."/>
            <person name="Whitehead S."/>
            <person name="Barrell B.G."/>
        </authorList>
    </citation>
    <scope>NUCLEOTIDE SEQUENCE [LARGE SCALE GENOMIC DNA]</scope>
    <source>
        <strain>ATCC 25618 / H37Rv</strain>
    </source>
</reference>
<reference key="2">
    <citation type="journal article" date="2005" name="Nucleic Acids Res.">
        <title>Toxin-antitoxin loci are highly abundant in free-living but lost from host-associated prokaryotes.</title>
        <authorList>
            <person name="Pandey D.P."/>
            <person name="Gerdes K."/>
        </authorList>
    </citation>
    <scope>POSSIBLE FUNCTION</scope>
    <source>
        <strain>ATCC 25618 / H37Rv</strain>
    </source>
</reference>
<reference key="3">
    <citation type="journal article" date="2009" name="J. Bacteriol.">
        <title>Three Mycobacterium tuberculosis Rel toxin-antitoxin modules inhibit mycobacterial growth and are expressed in infected human macrophages.</title>
        <authorList>
            <person name="Korch S.B."/>
            <person name="Contreras H."/>
            <person name="Clark-Curtiss J.E."/>
        </authorList>
    </citation>
    <scope>FUNCTION AS A TOXIN</scope>
    <scope>FUNCTION AS A TRANSCRIPTIONAL REGULATOR</scope>
    <scope>EXPRESSION IN M.SMEGMATIS</scope>
    <scope>SUBUNIT</scope>
    <scope>INDUCTION</scope>
    <scope>OPERON STRUCTURE</scope>
    <source>
        <strain>ATCC 25618 / H37Rv</strain>
    </source>
</reference>
<reference key="4">
    <citation type="journal article" date="2009" name="PLoS Genet.">
        <title>Comprehensive functional analysis of Mycobacterium tuberculosis toxin-antitoxin systems: implications for pathogenesis, stress responses, and evolution.</title>
        <authorList>
            <person name="Ramage H.R."/>
            <person name="Connolly L.E."/>
            <person name="Cox J.S."/>
        </authorList>
    </citation>
    <scope>EXPRESSION IN M.SMEGMATIS</scope>
    <scope>FUNCTION AS A TOXIN</scope>
    <source>
        <strain>ATCC 35801 / TMC 107 / Erdman</strain>
    </source>
</reference>
<reference key="5">
    <citation type="journal article" date="2010" name="J. Bacteriol.">
        <title>The three RelE homologs of Mycobacterium tuberculosis have individual, drug-specific effects on bacterial antibiotic tolerance.</title>
        <authorList>
            <person name="Singh R."/>
            <person name="Barry C.E. III"/>
            <person name="Boshoff H.I."/>
        </authorList>
    </citation>
    <scope>FUNCTION IN M.TUBERCULOSIS</scope>
    <scope>INDUCTION</scope>
    <scope>DISRUPTION PHENOTYPE</scope>
    <source>
        <strain>ATCC 27294 / TMC 102 / H37Rv</strain>
    </source>
</reference>
<reference key="6">
    <citation type="journal article" date="2010" name="PLoS ONE">
        <title>Characterization of the interaction and cross-regulation of three Mycobacterium tuberculosis RelBE modules.</title>
        <authorList>
            <person name="Yang M."/>
            <person name="Gao C."/>
            <person name="Wang Y."/>
            <person name="Zhang H."/>
            <person name="He Z.G."/>
        </authorList>
    </citation>
    <scope>FUNCTION AS A TOXIN</scope>
    <scope>SUBUNIT</scope>
    <scope>INTERACTION WITH RELF</scope>
    <source>
        <strain>ATCC 25618 / H37Rv</strain>
    </source>
</reference>
<reference key="7">
    <citation type="journal article" date="2011" name="Mol. Cell. Proteomics">
        <title>Proteogenomic analysis of Mycobacterium tuberculosis by high resolution mass spectrometry.</title>
        <authorList>
            <person name="Kelkar D.S."/>
            <person name="Kumar D."/>
            <person name="Kumar P."/>
            <person name="Balakrishnan L."/>
            <person name="Muthusamy B."/>
            <person name="Yadav A.K."/>
            <person name="Shrivastava P."/>
            <person name="Marimuthu A."/>
            <person name="Anand S."/>
            <person name="Sundaram H."/>
            <person name="Kingsbury R."/>
            <person name="Harsha H.C."/>
            <person name="Nair B."/>
            <person name="Prasad T.S."/>
            <person name="Chauhan D.S."/>
            <person name="Katoch K."/>
            <person name="Katoch V.M."/>
            <person name="Kumar P."/>
            <person name="Chaerkady R."/>
            <person name="Ramachandran S."/>
            <person name="Dash D."/>
            <person name="Pandey A."/>
        </authorList>
    </citation>
    <scope>IDENTIFICATION BY MASS SPECTROMETRY [LARGE SCALE ANALYSIS]</scope>
    <source>
        <strain>ATCC 25618 / H37Rv</strain>
    </source>
</reference>
<comment type="function">
    <text evidence="1 2 3 4 5">Toxic component of a type II toxin-antitoxin (TA) system. Has RNase activity (By similarity). Overexpression in M.tuberculosis or M.smegmatis inhibits colony formation in a bacteriostatic rather than bacteriocidal fashion. Its toxic effect is neutralized by coexpression with cognate antitoxin RelB (shown only for M.smegmatis).</text>
</comment>
<comment type="function">
    <text>In combination with RelB represses its own promoter. Has been seen to bind DNA in complex with cognate antitoxin RelB but not alone.</text>
</comment>
<comment type="subunit">
    <text evidence="2 5">Interacts with cognate antitoxin RelB, which neutralizes the toxin. Also interacts with non-cognate antitoxin RelF in vitro, in M.smegmatis coexpression of these 2 genes increases the toxicity of RelE.</text>
</comment>
<comment type="induction">
    <text evidence="2 4">Expressed in log phase cells (at protein level). Induced by rifampicin treatment. Expressed in human macrophages 110 hours after infection. Induced in the lungs of mice infected for 4 weeks. A member of the relBE operon.</text>
</comment>
<comment type="disruption phenotype">
    <text evidence="4">No visible phenotype in culture or upon infection of mice.</text>
</comment>
<comment type="similarity">
    <text evidence="6">Belongs to the RelE toxin family.</text>
</comment>
<gene>
    <name type="primary">relE</name>
    <name type="synonym">relE1</name>
    <name type="ordered locus">Rv1246c</name>
</gene>
<accession>O50461</accession>
<accession>L0T6B0</accession>
<dbReference type="EC" id="3.1.-.-"/>
<dbReference type="EMBL" id="AL123456">
    <property type="protein sequence ID" value="CCP44002.1"/>
    <property type="molecule type" value="Genomic_DNA"/>
</dbReference>
<dbReference type="PIR" id="E70953">
    <property type="entry name" value="E70953"/>
</dbReference>
<dbReference type="RefSeq" id="NP_215762.1">
    <property type="nucleotide sequence ID" value="NC_000962.3"/>
</dbReference>
<dbReference type="RefSeq" id="WP_003898789.1">
    <property type="nucleotide sequence ID" value="NZ_NVQJ01000049.1"/>
</dbReference>
<dbReference type="SMR" id="O50461"/>
<dbReference type="FunCoup" id="O50461">
    <property type="interactions" value="1"/>
</dbReference>
<dbReference type="STRING" id="83332.Rv1246c"/>
<dbReference type="PaxDb" id="83332-Rv1246c"/>
<dbReference type="GeneID" id="45425216"/>
<dbReference type="GeneID" id="887099"/>
<dbReference type="KEGG" id="mtu:Rv1246c"/>
<dbReference type="KEGG" id="mtv:RVBD_1246c"/>
<dbReference type="TubercuList" id="Rv1246c"/>
<dbReference type="eggNOG" id="COG2026">
    <property type="taxonomic scope" value="Bacteria"/>
</dbReference>
<dbReference type="InParanoid" id="O50461"/>
<dbReference type="OrthoDB" id="5326046at2"/>
<dbReference type="PhylomeDB" id="O50461"/>
<dbReference type="Proteomes" id="UP000001584">
    <property type="component" value="Chromosome"/>
</dbReference>
<dbReference type="GO" id="GO:0003677">
    <property type="term" value="F:DNA binding"/>
    <property type="evidence" value="ECO:0007669"/>
    <property type="project" value="UniProtKB-KW"/>
</dbReference>
<dbReference type="GO" id="GO:0004519">
    <property type="term" value="F:endonuclease activity"/>
    <property type="evidence" value="ECO:0000314"/>
    <property type="project" value="MTBBASE"/>
</dbReference>
<dbReference type="GO" id="GO:0006402">
    <property type="term" value="P:mRNA catabolic process"/>
    <property type="evidence" value="ECO:0000318"/>
    <property type="project" value="GO_Central"/>
</dbReference>
<dbReference type="GO" id="GO:0045926">
    <property type="term" value="P:negative regulation of growth"/>
    <property type="evidence" value="ECO:0000315"/>
    <property type="project" value="MTBBASE"/>
</dbReference>
<dbReference type="GO" id="GO:0006401">
    <property type="term" value="P:RNA catabolic process"/>
    <property type="evidence" value="ECO:0000314"/>
    <property type="project" value="MTBBASE"/>
</dbReference>
<dbReference type="FunFam" id="3.30.2310.20:FF:000004">
    <property type="entry name" value="Toxin RelE"/>
    <property type="match status" value="1"/>
</dbReference>
<dbReference type="Gene3D" id="3.30.2310.20">
    <property type="entry name" value="RelE-like"/>
    <property type="match status" value="1"/>
</dbReference>
<dbReference type="InterPro" id="IPR007712">
    <property type="entry name" value="RelE/ParE_toxin"/>
</dbReference>
<dbReference type="InterPro" id="IPR035093">
    <property type="entry name" value="RelE/ParE_toxin_dom_sf"/>
</dbReference>
<dbReference type="PANTHER" id="PTHR35601">
    <property type="entry name" value="TOXIN RELE"/>
    <property type="match status" value="1"/>
</dbReference>
<dbReference type="PANTHER" id="PTHR35601:SF1">
    <property type="entry name" value="TOXIN RELE"/>
    <property type="match status" value="1"/>
</dbReference>
<dbReference type="Pfam" id="PF05016">
    <property type="entry name" value="ParE_toxin"/>
    <property type="match status" value="1"/>
</dbReference>
<dbReference type="SUPFAM" id="SSF143011">
    <property type="entry name" value="RelE-like"/>
    <property type="match status" value="1"/>
</dbReference>
<evidence type="ECO:0000250" key="1"/>
<evidence type="ECO:0000269" key="2">
    <source>
    </source>
</evidence>
<evidence type="ECO:0000269" key="3">
    <source>
    </source>
</evidence>
<evidence type="ECO:0000269" key="4">
    <source>
    </source>
</evidence>
<evidence type="ECO:0000269" key="5">
    <source>
    </source>
</evidence>
<evidence type="ECO:0000305" key="6"/>
<feature type="chain" id="PRO_0000406199" description="Toxin RelE">
    <location>
        <begin position="1"/>
        <end position="97"/>
    </location>
</feature>
<keyword id="KW-0238">DNA-binding</keyword>
<keyword id="KW-0378">Hydrolase</keyword>
<keyword id="KW-0540">Nuclease</keyword>
<keyword id="KW-1185">Reference proteome</keyword>
<keyword id="KW-0678">Repressor</keyword>
<keyword id="KW-1277">Toxin-antitoxin system</keyword>
<keyword id="KW-0804">Transcription</keyword>
<keyword id="KW-0805">Transcription regulation</keyword>
<organism>
    <name type="scientific">Mycobacterium tuberculosis (strain ATCC 25618 / H37Rv)</name>
    <dbReference type="NCBI Taxonomy" id="83332"/>
    <lineage>
        <taxon>Bacteria</taxon>
        <taxon>Bacillati</taxon>
        <taxon>Actinomycetota</taxon>
        <taxon>Actinomycetes</taxon>
        <taxon>Mycobacteriales</taxon>
        <taxon>Mycobacteriaceae</taxon>
        <taxon>Mycobacterium</taxon>
        <taxon>Mycobacterium tuberculosis complex</taxon>
    </lineage>
</organism>